<evidence type="ECO:0000255" key="1">
    <source>
        <dbReference type="HAMAP-Rule" id="MF_01152"/>
    </source>
</evidence>
<gene>
    <name evidence="1" type="primary">dnaJ</name>
    <name type="ordered locus">Rpal_0337</name>
</gene>
<accession>B3Q973</accession>
<dbReference type="EMBL" id="CP001096">
    <property type="protein sequence ID" value="ACE98897.1"/>
    <property type="molecule type" value="Genomic_DNA"/>
</dbReference>
<dbReference type="RefSeq" id="WP_011155902.1">
    <property type="nucleotide sequence ID" value="NC_011004.1"/>
</dbReference>
<dbReference type="SMR" id="B3Q973"/>
<dbReference type="GeneID" id="66891345"/>
<dbReference type="KEGG" id="rpt:Rpal_0337"/>
<dbReference type="HOGENOM" id="CLU_017633_0_7_5"/>
<dbReference type="OrthoDB" id="9779889at2"/>
<dbReference type="Proteomes" id="UP000001725">
    <property type="component" value="Chromosome"/>
</dbReference>
<dbReference type="GO" id="GO:0005737">
    <property type="term" value="C:cytoplasm"/>
    <property type="evidence" value="ECO:0007669"/>
    <property type="project" value="UniProtKB-SubCell"/>
</dbReference>
<dbReference type="GO" id="GO:0005524">
    <property type="term" value="F:ATP binding"/>
    <property type="evidence" value="ECO:0007669"/>
    <property type="project" value="InterPro"/>
</dbReference>
<dbReference type="GO" id="GO:0031072">
    <property type="term" value="F:heat shock protein binding"/>
    <property type="evidence" value="ECO:0007669"/>
    <property type="project" value="InterPro"/>
</dbReference>
<dbReference type="GO" id="GO:0051082">
    <property type="term" value="F:unfolded protein binding"/>
    <property type="evidence" value="ECO:0007669"/>
    <property type="project" value="UniProtKB-UniRule"/>
</dbReference>
<dbReference type="GO" id="GO:0008270">
    <property type="term" value="F:zinc ion binding"/>
    <property type="evidence" value="ECO:0007669"/>
    <property type="project" value="UniProtKB-UniRule"/>
</dbReference>
<dbReference type="GO" id="GO:0051085">
    <property type="term" value="P:chaperone cofactor-dependent protein refolding"/>
    <property type="evidence" value="ECO:0007669"/>
    <property type="project" value="TreeGrafter"/>
</dbReference>
<dbReference type="GO" id="GO:0006260">
    <property type="term" value="P:DNA replication"/>
    <property type="evidence" value="ECO:0007669"/>
    <property type="project" value="UniProtKB-KW"/>
</dbReference>
<dbReference type="GO" id="GO:0042026">
    <property type="term" value="P:protein refolding"/>
    <property type="evidence" value="ECO:0007669"/>
    <property type="project" value="TreeGrafter"/>
</dbReference>
<dbReference type="GO" id="GO:0009408">
    <property type="term" value="P:response to heat"/>
    <property type="evidence" value="ECO:0007669"/>
    <property type="project" value="InterPro"/>
</dbReference>
<dbReference type="CDD" id="cd06257">
    <property type="entry name" value="DnaJ"/>
    <property type="match status" value="1"/>
</dbReference>
<dbReference type="CDD" id="cd10747">
    <property type="entry name" value="DnaJ_C"/>
    <property type="match status" value="1"/>
</dbReference>
<dbReference type="CDD" id="cd10719">
    <property type="entry name" value="DnaJ_zf"/>
    <property type="match status" value="1"/>
</dbReference>
<dbReference type="FunFam" id="1.10.287.110:FF:000034">
    <property type="entry name" value="Chaperone protein DnaJ"/>
    <property type="match status" value="1"/>
</dbReference>
<dbReference type="FunFam" id="2.10.230.10:FF:000002">
    <property type="entry name" value="Molecular chaperone DnaJ"/>
    <property type="match status" value="1"/>
</dbReference>
<dbReference type="FunFam" id="2.60.260.20:FF:000004">
    <property type="entry name" value="Molecular chaperone DnaJ"/>
    <property type="match status" value="1"/>
</dbReference>
<dbReference type="Gene3D" id="1.10.287.110">
    <property type="entry name" value="DnaJ domain"/>
    <property type="match status" value="1"/>
</dbReference>
<dbReference type="Gene3D" id="2.10.230.10">
    <property type="entry name" value="Heat shock protein DnaJ, cysteine-rich domain"/>
    <property type="match status" value="1"/>
</dbReference>
<dbReference type="Gene3D" id="2.60.260.20">
    <property type="entry name" value="Urease metallochaperone UreE, N-terminal domain"/>
    <property type="match status" value="2"/>
</dbReference>
<dbReference type="HAMAP" id="MF_01152">
    <property type="entry name" value="DnaJ"/>
    <property type="match status" value="1"/>
</dbReference>
<dbReference type="InterPro" id="IPR012724">
    <property type="entry name" value="DnaJ"/>
</dbReference>
<dbReference type="InterPro" id="IPR002939">
    <property type="entry name" value="DnaJ_C"/>
</dbReference>
<dbReference type="InterPro" id="IPR001623">
    <property type="entry name" value="DnaJ_domain"/>
</dbReference>
<dbReference type="InterPro" id="IPR018253">
    <property type="entry name" value="DnaJ_domain_CS"/>
</dbReference>
<dbReference type="InterPro" id="IPR008971">
    <property type="entry name" value="HSP40/DnaJ_pept-bd"/>
</dbReference>
<dbReference type="InterPro" id="IPR001305">
    <property type="entry name" value="HSP_DnaJ_Cys-rich_dom"/>
</dbReference>
<dbReference type="InterPro" id="IPR036410">
    <property type="entry name" value="HSP_DnaJ_Cys-rich_dom_sf"/>
</dbReference>
<dbReference type="InterPro" id="IPR036869">
    <property type="entry name" value="J_dom_sf"/>
</dbReference>
<dbReference type="NCBIfam" id="TIGR02349">
    <property type="entry name" value="DnaJ_bact"/>
    <property type="match status" value="1"/>
</dbReference>
<dbReference type="NCBIfam" id="NF008035">
    <property type="entry name" value="PRK10767.1"/>
    <property type="match status" value="1"/>
</dbReference>
<dbReference type="PANTHER" id="PTHR43096:SF48">
    <property type="entry name" value="CHAPERONE PROTEIN DNAJ"/>
    <property type="match status" value="1"/>
</dbReference>
<dbReference type="PANTHER" id="PTHR43096">
    <property type="entry name" value="DNAJ HOMOLOG 1, MITOCHONDRIAL-RELATED"/>
    <property type="match status" value="1"/>
</dbReference>
<dbReference type="Pfam" id="PF00226">
    <property type="entry name" value="DnaJ"/>
    <property type="match status" value="1"/>
</dbReference>
<dbReference type="Pfam" id="PF01556">
    <property type="entry name" value="DnaJ_C"/>
    <property type="match status" value="1"/>
</dbReference>
<dbReference type="Pfam" id="PF00684">
    <property type="entry name" value="DnaJ_CXXCXGXG"/>
    <property type="match status" value="1"/>
</dbReference>
<dbReference type="PRINTS" id="PR00625">
    <property type="entry name" value="JDOMAIN"/>
</dbReference>
<dbReference type="SMART" id="SM00271">
    <property type="entry name" value="DnaJ"/>
    <property type="match status" value="1"/>
</dbReference>
<dbReference type="SUPFAM" id="SSF46565">
    <property type="entry name" value="Chaperone J-domain"/>
    <property type="match status" value="1"/>
</dbReference>
<dbReference type="SUPFAM" id="SSF57938">
    <property type="entry name" value="DnaJ/Hsp40 cysteine-rich domain"/>
    <property type="match status" value="1"/>
</dbReference>
<dbReference type="SUPFAM" id="SSF49493">
    <property type="entry name" value="HSP40/DnaJ peptide-binding domain"/>
    <property type="match status" value="2"/>
</dbReference>
<dbReference type="PROSITE" id="PS00636">
    <property type="entry name" value="DNAJ_1"/>
    <property type="match status" value="1"/>
</dbReference>
<dbReference type="PROSITE" id="PS50076">
    <property type="entry name" value="DNAJ_2"/>
    <property type="match status" value="1"/>
</dbReference>
<dbReference type="PROSITE" id="PS51188">
    <property type="entry name" value="ZF_CR"/>
    <property type="match status" value="1"/>
</dbReference>
<name>DNAJ_RHOPT</name>
<reference key="1">
    <citation type="submission" date="2008-05" db="EMBL/GenBank/DDBJ databases">
        <title>Complete sequence of Rhodopseudomonas palustris TIE-1.</title>
        <authorList>
            <consortium name="US DOE Joint Genome Institute"/>
            <person name="Lucas S."/>
            <person name="Copeland A."/>
            <person name="Lapidus A."/>
            <person name="Glavina del Rio T."/>
            <person name="Dalin E."/>
            <person name="Tice H."/>
            <person name="Pitluck S."/>
            <person name="Chain P."/>
            <person name="Malfatti S."/>
            <person name="Shin M."/>
            <person name="Vergez L."/>
            <person name="Lang D."/>
            <person name="Schmutz J."/>
            <person name="Larimer F."/>
            <person name="Land M."/>
            <person name="Hauser L."/>
            <person name="Kyrpides N."/>
            <person name="Mikhailova N."/>
            <person name="Emerson D."/>
            <person name="Newman D.K."/>
            <person name="Roden E."/>
            <person name="Richardson P."/>
        </authorList>
    </citation>
    <scope>NUCLEOTIDE SEQUENCE [LARGE SCALE GENOMIC DNA]</scope>
    <source>
        <strain>TIE-1</strain>
    </source>
</reference>
<comment type="function">
    <text evidence="1">Participates actively in the response to hyperosmotic and heat shock by preventing the aggregation of stress-denatured proteins and by disaggregating proteins, also in an autonomous, DnaK-independent fashion. Unfolded proteins bind initially to DnaJ; upon interaction with the DnaJ-bound protein, DnaK hydrolyzes its bound ATP, resulting in the formation of a stable complex. GrpE releases ADP from DnaK; ATP binding to DnaK triggers the release of the substrate protein, thus completing the reaction cycle. Several rounds of ATP-dependent interactions between DnaJ, DnaK and GrpE are required for fully efficient folding. Also involved, together with DnaK and GrpE, in the DNA replication of plasmids through activation of initiation proteins.</text>
</comment>
<comment type="cofactor">
    <cofactor evidence="1">
        <name>Zn(2+)</name>
        <dbReference type="ChEBI" id="CHEBI:29105"/>
    </cofactor>
    <text evidence="1">Binds 2 Zn(2+) ions per monomer.</text>
</comment>
<comment type="subunit">
    <text evidence="1">Homodimer.</text>
</comment>
<comment type="subcellular location">
    <subcellularLocation>
        <location evidence="1">Cytoplasm</location>
    </subcellularLocation>
</comment>
<comment type="domain">
    <text evidence="1">The J domain is necessary and sufficient to stimulate DnaK ATPase activity. Zinc center 1 plays an important role in the autonomous, DnaK-independent chaperone activity of DnaJ. Zinc center 2 is essential for interaction with DnaK and for DnaJ activity.</text>
</comment>
<comment type="similarity">
    <text evidence="1">Belongs to the DnaJ family.</text>
</comment>
<keyword id="KW-0143">Chaperone</keyword>
<keyword id="KW-0963">Cytoplasm</keyword>
<keyword id="KW-0235">DNA replication</keyword>
<keyword id="KW-0479">Metal-binding</keyword>
<keyword id="KW-0677">Repeat</keyword>
<keyword id="KW-0346">Stress response</keyword>
<keyword id="KW-0862">Zinc</keyword>
<keyword id="KW-0863">Zinc-finger</keyword>
<protein>
    <recommendedName>
        <fullName evidence="1">Chaperone protein DnaJ</fullName>
    </recommendedName>
</protein>
<sequence>MSTTKRCYYETLEVERNADDSTLKSAFRKLAMKWHPDRNPGDPQCEIKFKEINEAYEVLKDGDKRAAYDRYGHAAFEQGGFGGGAGFGAGFASSFSDIFEDLFGMAAQRGRGTGRERGADLRYNMEITLEDAFKGKTAQIEIPVSVTCEACSGTGAKAGTKPKTCSTCGGAGRVRQAQGFFTLERTCPSCQGRGQTIEDPCPSCTGSGRVTKERTLSVNIPQGVEDGTRIRLAGEGEAGLRGGPPGDLYIFLSLANHAIFQRDGADLHCRVPISMVTAALGGEFEVPTIDRGKTKVKVPSGTQTGRRFRIAGKGMPVLRSRQVGDMYVQVVVETPQNLTKKQQELLAEFEKLSSGETQPEAVGFFSKVKEFFGSRASAP</sequence>
<feature type="chain" id="PRO_1000137718" description="Chaperone protein DnaJ">
    <location>
        <begin position="1"/>
        <end position="379"/>
    </location>
</feature>
<feature type="domain" description="J" evidence="1">
    <location>
        <begin position="7"/>
        <end position="72"/>
    </location>
</feature>
<feature type="repeat" description="CXXCXGXG motif">
    <location>
        <begin position="148"/>
        <end position="155"/>
    </location>
</feature>
<feature type="repeat" description="CXXCXGXG motif">
    <location>
        <begin position="165"/>
        <end position="172"/>
    </location>
</feature>
<feature type="repeat" description="CXXCXGXG motif">
    <location>
        <begin position="187"/>
        <end position="194"/>
    </location>
</feature>
<feature type="repeat" description="CXXCXGXG motif">
    <location>
        <begin position="201"/>
        <end position="208"/>
    </location>
</feature>
<feature type="zinc finger region" description="CR-type" evidence="1">
    <location>
        <begin position="135"/>
        <end position="213"/>
    </location>
</feature>
<feature type="binding site" evidence="1">
    <location>
        <position position="148"/>
    </location>
    <ligand>
        <name>Zn(2+)</name>
        <dbReference type="ChEBI" id="CHEBI:29105"/>
        <label>1</label>
    </ligand>
</feature>
<feature type="binding site" evidence="1">
    <location>
        <position position="151"/>
    </location>
    <ligand>
        <name>Zn(2+)</name>
        <dbReference type="ChEBI" id="CHEBI:29105"/>
        <label>1</label>
    </ligand>
</feature>
<feature type="binding site" evidence="1">
    <location>
        <position position="165"/>
    </location>
    <ligand>
        <name>Zn(2+)</name>
        <dbReference type="ChEBI" id="CHEBI:29105"/>
        <label>2</label>
    </ligand>
</feature>
<feature type="binding site" evidence="1">
    <location>
        <position position="168"/>
    </location>
    <ligand>
        <name>Zn(2+)</name>
        <dbReference type="ChEBI" id="CHEBI:29105"/>
        <label>2</label>
    </ligand>
</feature>
<feature type="binding site" evidence="1">
    <location>
        <position position="187"/>
    </location>
    <ligand>
        <name>Zn(2+)</name>
        <dbReference type="ChEBI" id="CHEBI:29105"/>
        <label>2</label>
    </ligand>
</feature>
<feature type="binding site" evidence="1">
    <location>
        <position position="190"/>
    </location>
    <ligand>
        <name>Zn(2+)</name>
        <dbReference type="ChEBI" id="CHEBI:29105"/>
        <label>2</label>
    </ligand>
</feature>
<feature type="binding site" evidence="1">
    <location>
        <position position="201"/>
    </location>
    <ligand>
        <name>Zn(2+)</name>
        <dbReference type="ChEBI" id="CHEBI:29105"/>
        <label>1</label>
    </ligand>
</feature>
<feature type="binding site" evidence="1">
    <location>
        <position position="204"/>
    </location>
    <ligand>
        <name>Zn(2+)</name>
        <dbReference type="ChEBI" id="CHEBI:29105"/>
        <label>1</label>
    </ligand>
</feature>
<organism>
    <name type="scientific">Rhodopseudomonas palustris (strain TIE-1)</name>
    <dbReference type="NCBI Taxonomy" id="395960"/>
    <lineage>
        <taxon>Bacteria</taxon>
        <taxon>Pseudomonadati</taxon>
        <taxon>Pseudomonadota</taxon>
        <taxon>Alphaproteobacteria</taxon>
        <taxon>Hyphomicrobiales</taxon>
        <taxon>Nitrobacteraceae</taxon>
        <taxon>Rhodopseudomonas</taxon>
    </lineage>
</organism>
<proteinExistence type="inferred from homology"/>